<keyword id="KW-0479">Metal-binding</keyword>
<keyword id="KW-1185">Reference proteome</keyword>
<keyword id="KW-0687">Ribonucleoprotein</keyword>
<keyword id="KW-0689">Ribosomal protein</keyword>
<keyword id="KW-0862">Zinc</keyword>
<comment type="cofactor">
    <cofactor evidence="2">
        <name>Zn(2+)</name>
        <dbReference type="ChEBI" id="CHEBI:29105"/>
    </cofactor>
    <text evidence="2">Binds 1 zinc ion per subunit.</text>
</comment>
<comment type="similarity">
    <text evidence="2">Belongs to the universal ribosomal protein uS14 family.</text>
</comment>
<proteinExistence type="inferred from homology"/>
<organism>
    <name type="scientific">Eremothecium gossypii (strain ATCC 10895 / CBS 109.51 / FGSC 9923 / NRRL Y-1056)</name>
    <name type="common">Yeast</name>
    <name type="synonym">Ashbya gossypii</name>
    <dbReference type="NCBI Taxonomy" id="284811"/>
    <lineage>
        <taxon>Eukaryota</taxon>
        <taxon>Fungi</taxon>
        <taxon>Dikarya</taxon>
        <taxon>Ascomycota</taxon>
        <taxon>Saccharomycotina</taxon>
        <taxon>Saccharomycetes</taxon>
        <taxon>Saccharomycetales</taxon>
        <taxon>Saccharomycetaceae</taxon>
        <taxon>Eremothecium</taxon>
    </lineage>
</organism>
<name>RS29_EREGS</name>
<feature type="chain" id="PRO_0000268810" description="Small ribosomal subunit protein uS14">
    <location>
        <begin position="1"/>
        <end position="56"/>
    </location>
</feature>
<feature type="binding site" evidence="1">
    <location>
        <position position="21"/>
    </location>
    <ligand>
        <name>Zn(2+)</name>
        <dbReference type="ChEBI" id="CHEBI:29105"/>
    </ligand>
</feature>
<feature type="binding site" evidence="1">
    <location>
        <position position="24"/>
    </location>
    <ligand>
        <name>Zn(2+)</name>
        <dbReference type="ChEBI" id="CHEBI:29105"/>
    </ligand>
</feature>
<feature type="binding site" evidence="1">
    <location>
        <position position="39"/>
    </location>
    <ligand>
        <name>Zn(2+)</name>
        <dbReference type="ChEBI" id="CHEBI:29105"/>
    </ligand>
</feature>
<feature type="binding site" evidence="1">
    <location>
        <position position="42"/>
    </location>
    <ligand>
        <name>Zn(2+)</name>
        <dbReference type="ChEBI" id="CHEBI:29105"/>
    </ligand>
</feature>
<sequence length="56" mass="6628">MAHENVWFSHPRNYGKGSRQCRVCASHSGLIRKYGLNICRQCFREKANDIGFHKYR</sequence>
<accession>Q757G1</accession>
<gene>
    <name type="primary">RPS29</name>
    <name type="ordered locus">AER052W</name>
</gene>
<dbReference type="EMBL" id="AE016818">
    <property type="protein sequence ID" value="AAS52736.1"/>
    <property type="molecule type" value="Genomic_DNA"/>
</dbReference>
<dbReference type="RefSeq" id="NP_984912.1">
    <property type="nucleotide sequence ID" value="NM_210266.2"/>
</dbReference>
<dbReference type="SMR" id="Q757G1"/>
<dbReference type="FunCoup" id="Q757G1">
    <property type="interactions" value="802"/>
</dbReference>
<dbReference type="STRING" id="284811.Q757G1"/>
<dbReference type="EnsemblFungi" id="AAS52736">
    <property type="protein sequence ID" value="AAS52736"/>
    <property type="gene ID" value="AGOS_AER052W"/>
</dbReference>
<dbReference type="GeneID" id="4621114"/>
<dbReference type="KEGG" id="ago:AGOS_AER052W"/>
<dbReference type="eggNOG" id="KOG3506">
    <property type="taxonomic scope" value="Eukaryota"/>
</dbReference>
<dbReference type="HOGENOM" id="CLU_177289_1_1_1"/>
<dbReference type="InParanoid" id="Q757G1"/>
<dbReference type="OMA" id="HCFREIA"/>
<dbReference type="OrthoDB" id="10252683at2759"/>
<dbReference type="Proteomes" id="UP000000591">
    <property type="component" value="Chromosome V"/>
</dbReference>
<dbReference type="GO" id="GO:0022627">
    <property type="term" value="C:cytosolic small ribosomal subunit"/>
    <property type="evidence" value="ECO:0000318"/>
    <property type="project" value="GO_Central"/>
</dbReference>
<dbReference type="GO" id="GO:0003735">
    <property type="term" value="F:structural constituent of ribosome"/>
    <property type="evidence" value="ECO:0000318"/>
    <property type="project" value="GO_Central"/>
</dbReference>
<dbReference type="GO" id="GO:0008270">
    <property type="term" value="F:zinc ion binding"/>
    <property type="evidence" value="ECO:0000318"/>
    <property type="project" value="GO_Central"/>
</dbReference>
<dbReference type="GO" id="GO:0002181">
    <property type="term" value="P:cytoplasmic translation"/>
    <property type="evidence" value="ECO:0000318"/>
    <property type="project" value="GO_Central"/>
</dbReference>
<dbReference type="FunFam" id="4.10.830.10:FF:000002">
    <property type="entry name" value="40S ribosomal protein S29"/>
    <property type="match status" value="1"/>
</dbReference>
<dbReference type="Gene3D" id="4.10.830.10">
    <property type="entry name" value="30s Ribosomal Protein S14, Chain N"/>
    <property type="match status" value="1"/>
</dbReference>
<dbReference type="InterPro" id="IPR001209">
    <property type="entry name" value="Ribosomal_uS14"/>
</dbReference>
<dbReference type="InterPro" id="IPR018271">
    <property type="entry name" value="Ribosomal_uS14_CS"/>
</dbReference>
<dbReference type="InterPro" id="IPR039744">
    <property type="entry name" value="RIbosomal_uS14_euk_arc"/>
</dbReference>
<dbReference type="InterPro" id="IPR043140">
    <property type="entry name" value="Ribosomal_uS14_sf"/>
</dbReference>
<dbReference type="NCBIfam" id="NF004424">
    <property type="entry name" value="PRK05766.1"/>
    <property type="match status" value="1"/>
</dbReference>
<dbReference type="PANTHER" id="PTHR12010">
    <property type="entry name" value="40S RIBOSOMAL PROTEIN S29"/>
    <property type="match status" value="1"/>
</dbReference>
<dbReference type="PANTHER" id="PTHR12010:SF2">
    <property type="entry name" value="40S RIBOSOMAL PROTEIN S29"/>
    <property type="match status" value="1"/>
</dbReference>
<dbReference type="Pfam" id="PF00253">
    <property type="entry name" value="Ribosomal_S14"/>
    <property type="match status" value="1"/>
</dbReference>
<dbReference type="PROSITE" id="PS00527">
    <property type="entry name" value="RIBOSOMAL_S14"/>
    <property type="match status" value="1"/>
</dbReference>
<protein>
    <recommendedName>
        <fullName evidence="2">Small ribosomal subunit protein uS14</fullName>
    </recommendedName>
    <alternativeName>
        <fullName>40S ribosomal protein S29</fullName>
    </alternativeName>
</protein>
<evidence type="ECO:0000255" key="1"/>
<evidence type="ECO:0000305" key="2"/>
<reference key="1">
    <citation type="journal article" date="2004" name="Science">
        <title>The Ashbya gossypii genome as a tool for mapping the ancient Saccharomyces cerevisiae genome.</title>
        <authorList>
            <person name="Dietrich F.S."/>
            <person name="Voegeli S."/>
            <person name="Brachat S."/>
            <person name="Lerch A."/>
            <person name="Gates K."/>
            <person name="Steiner S."/>
            <person name="Mohr C."/>
            <person name="Poehlmann R."/>
            <person name="Luedi P."/>
            <person name="Choi S."/>
            <person name="Wing R.A."/>
            <person name="Flavier A."/>
            <person name="Gaffney T.D."/>
            <person name="Philippsen P."/>
        </authorList>
    </citation>
    <scope>NUCLEOTIDE SEQUENCE [LARGE SCALE GENOMIC DNA]</scope>
    <source>
        <strain>ATCC 10895 / CBS 109.51 / FGSC 9923 / NRRL Y-1056</strain>
    </source>
</reference>
<reference key="2">
    <citation type="journal article" date="2013" name="G3 (Bethesda)">
        <title>Genomes of Ashbya fungi isolated from insects reveal four mating-type loci, numerous translocations, lack of transposons, and distinct gene duplications.</title>
        <authorList>
            <person name="Dietrich F.S."/>
            <person name="Voegeli S."/>
            <person name="Kuo S."/>
            <person name="Philippsen P."/>
        </authorList>
    </citation>
    <scope>GENOME REANNOTATION</scope>
    <source>
        <strain>ATCC 10895 / CBS 109.51 / FGSC 9923 / NRRL Y-1056</strain>
    </source>
</reference>